<protein>
    <recommendedName>
        <fullName evidence="1">Ribosomal RNA small subunit methyltransferase G</fullName>
        <ecNumber evidence="1">2.1.1.-</ecNumber>
    </recommendedName>
    <alternativeName>
        <fullName evidence="1">16S rRNA 7-methylguanosine methyltransferase</fullName>
        <shortName evidence="1">16S rRNA m7G methyltransferase</shortName>
    </alternativeName>
</protein>
<accession>A4VZL7</accession>
<name>RSMG_STRS2</name>
<proteinExistence type="inferred from homology"/>
<gene>
    <name evidence="1" type="primary">rsmG</name>
    <name type="ordered locus">SSU98_0398</name>
</gene>
<keyword id="KW-0963">Cytoplasm</keyword>
<keyword id="KW-0489">Methyltransferase</keyword>
<keyword id="KW-0698">rRNA processing</keyword>
<keyword id="KW-0949">S-adenosyl-L-methionine</keyword>
<keyword id="KW-0808">Transferase</keyword>
<feature type="chain" id="PRO_1000010226" description="Ribosomal RNA small subunit methyltransferase G">
    <location>
        <begin position="1"/>
        <end position="237"/>
    </location>
</feature>
<feature type="region of interest" description="Disordered" evidence="2">
    <location>
        <begin position="218"/>
        <end position="237"/>
    </location>
</feature>
<feature type="binding site" evidence="1">
    <location>
        <position position="78"/>
    </location>
    <ligand>
        <name>S-adenosyl-L-methionine</name>
        <dbReference type="ChEBI" id="CHEBI:59789"/>
    </ligand>
</feature>
<feature type="binding site" evidence="1">
    <location>
        <position position="83"/>
    </location>
    <ligand>
        <name>S-adenosyl-L-methionine</name>
        <dbReference type="ChEBI" id="CHEBI:59789"/>
    </ligand>
</feature>
<feature type="binding site" evidence="1">
    <location>
        <begin position="129"/>
        <end position="130"/>
    </location>
    <ligand>
        <name>S-adenosyl-L-methionine</name>
        <dbReference type="ChEBI" id="CHEBI:59789"/>
    </ligand>
</feature>
<feature type="binding site" evidence="1">
    <location>
        <position position="148"/>
    </location>
    <ligand>
        <name>S-adenosyl-L-methionine</name>
        <dbReference type="ChEBI" id="CHEBI:59789"/>
    </ligand>
</feature>
<dbReference type="EC" id="2.1.1.-" evidence="1"/>
<dbReference type="EMBL" id="CP000408">
    <property type="protein sequence ID" value="ABP91556.1"/>
    <property type="molecule type" value="Genomic_DNA"/>
</dbReference>
<dbReference type="SMR" id="A4VZL7"/>
<dbReference type="KEGG" id="ssv:SSU98_0398"/>
<dbReference type="HOGENOM" id="CLU_065341_0_2_9"/>
<dbReference type="GO" id="GO:0005829">
    <property type="term" value="C:cytosol"/>
    <property type="evidence" value="ECO:0007669"/>
    <property type="project" value="TreeGrafter"/>
</dbReference>
<dbReference type="GO" id="GO:0070043">
    <property type="term" value="F:rRNA (guanine-N7-)-methyltransferase activity"/>
    <property type="evidence" value="ECO:0007669"/>
    <property type="project" value="UniProtKB-UniRule"/>
</dbReference>
<dbReference type="CDD" id="cd02440">
    <property type="entry name" value="AdoMet_MTases"/>
    <property type="match status" value="1"/>
</dbReference>
<dbReference type="FunFam" id="3.40.50.150:FF:000041">
    <property type="entry name" value="Ribosomal RNA small subunit methyltransferase G"/>
    <property type="match status" value="1"/>
</dbReference>
<dbReference type="Gene3D" id="3.40.50.150">
    <property type="entry name" value="Vaccinia Virus protein VP39"/>
    <property type="match status" value="1"/>
</dbReference>
<dbReference type="HAMAP" id="MF_00074">
    <property type="entry name" value="16SrRNA_methyltr_G"/>
    <property type="match status" value="1"/>
</dbReference>
<dbReference type="InterPro" id="IPR003682">
    <property type="entry name" value="rRNA_ssu_MeTfrase_G"/>
</dbReference>
<dbReference type="InterPro" id="IPR029063">
    <property type="entry name" value="SAM-dependent_MTases_sf"/>
</dbReference>
<dbReference type="NCBIfam" id="TIGR00138">
    <property type="entry name" value="rsmG_gidB"/>
    <property type="match status" value="1"/>
</dbReference>
<dbReference type="PANTHER" id="PTHR31760">
    <property type="entry name" value="S-ADENOSYL-L-METHIONINE-DEPENDENT METHYLTRANSFERASES SUPERFAMILY PROTEIN"/>
    <property type="match status" value="1"/>
</dbReference>
<dbReference type="PANTHER" id="PTHR31760:SF0">
    <property type="entry name" value="S-ADENOSYL-L-METHIONINE-DEPENDENT METHYLTRANSFERASES SUPERFAMILY PROTEIN"/>
    <property type="match status" value="1"/>
</dbReference>
<dbReference type="Pfam" id="PF02527">
    <property type="entry name" value="GidB"/>
    <property type="match status" value="1"/>
</dbReference>
<dbReference type="PIRSF" id="PIRSF003078">
    <property type="entry name" value="GidB"/>
    <property type="match status" value="1"/>
</dbReference>
<dbReference type="SUPFAM" id="SSF53335">
    <property type="entry name" value="S-adenosyl-L-methionine-dependent methyltransferases"/>
    <property type="match status" value="1"/>
</dbReference>
<reference key="1">
    <citation type="journal article" date="2007" name="PLoS ONE">
        <title>A glimpse of streptococcal toxic shock syndrome from comparative genomics of S. suis 2 Chinese isolates.</title>
        <authorList>
            <person name="Chen C."/>
            <person name="Tang J."/>
            <person name="Dong W."/>
            <person name="Wang C."/>
            <person name="Feng Y."/>
            <person name="Wang J."/>
            <person name="Zheng F."/>
            <person name="Pan X."/>
            <person name="Liu D."/>
            <person name="Li M."/>
            <person name="Song Y."/>
            <person name="Zhu X."/>
            <person name="Sun H."/>
            <person name="Feng T."/>
            <person name="Guo Z."/>
            <person name="Ju A."/>
            <person name="Ge J."/>
            <person name="Dong Y."/>
            <person name="Sun W."/>
            <person name="Jiang Y."/>
            <person name="Wang J."/>
            <person name="Yan J."/>
            <person name="Yang H."/>
            <person name="Wang X."/>
            <person name="Gao G.F."/>
            <person name="Yang R."/>
            <person name="Wang J."/>
            <person name="Yu J."/>
        </authorList>
    </citation>
    <scope>NUCLEOTIDE SEQUENCE [LARGE SCALE GENOMIC DNA]</scope>
    <source>
        <strain>98HAH33</strain>
    </source>
</reference>
<sequence length="237" mass="27199">MKPEVFYKTLADQGIQLTDQQKHQFHRYFQLLVEWNEKINLTAITEESEVYLKHFYDSIAPLLQGHIQNEPLRLLDIGAGAGFPSLPMKIIFPQLDVTIIDSLNKRINFLHLLAEELELEGVHFYHGRAEDFAQDKNFRAQFDLVTARAVARMQILSELTIPYLKLHGKLIALKASSAEDELTQAKNALNLLFAKVIENHDYTLPNGDPRTLTIVEKKKETPNKFPRKAGMPNKRPL</sequence>
<evidence type="ECO:0000255" key="1">
    <source>
        <dbReference type="HAMAP-Rule" id="MF_00074"/>
    </source>
</evidence>
<evidence type="ECO:0000256" key="2">
    <source>
        <dbReference type="SAM" id="MobiDB-lite"/>
    </source>
</evidence>
<organism>
    <name type="scientific">Streptococcus suis (strain 98HAH33)</name>
    <dbReference type="NCBI Taxonomy" id="391296"/>
    <lineage>
        <taxon>Bacteria</taxon>
        <taxon>Bacillati</taxon>
        <taxon>Bacillota</taxon>
        <taxon>Bacilli</taxon>
        <taxon>Lactobacillales</taxon>
        <taxon>Streptococcaceae</taxon>
        <taxon>Streptococcus</taxon>
    </lineage>
</organism>
<comment type="function">
    <text evidence="1">Specifically methylates the N7 position of a guanine in 16S rRNA.</text>
</comment>
<comment type="subcellular location">
    <subcellularLocation>
        <location evidence="1">Cytoplasm</location>
    </subcellularLocation>
</comment>
<comment type="similarity">
    <text evidence="1">Belongs to the methyltransferase superfamily. RNA methyltransferase RsmG family.</text>
</comment>